<reference key="1">
    <citation type="journal article" date="2000" name="Nature">
        <title>Complete genome sequence of Pseudomonas aeruginosa PAO1, an opportunistic pathogen.</title>
        <authorList>
            <person name="Stover C.K."/>
            <person name="Pham X.-Q.T."/>
            <person name="Erwin A.L."/>
            <person name="Mizoguchi S.D."/>
            <person name="Warrener P."/>
            <person name="Hickey M.J."/>
            <person name="Brinkman F.S.L."/>
            <person name="Hufnagle W.O."/>
            <person name="Kowalik D.J."/>
            <person name="Lagrou M."/>
            <person name="Garber R.L."/>
            <person name="Goltry L."/>
            <person name="Tolentino E."/>
            <person name="Westbrock-Wadman S."/>
            <person name="Yuan Y."/>
            <person name="Brody L.L."/>
            <person name="Coulter S.N."/>
            <person name="Folger K.R."/>
            <person name="Kas A."/>
            <person name="Larbig K."/>
            <person name="Lim R.M."/>
            <person name="Smith K.A."/>
            <person name="Spencer D.H."/>
            <person name="Wong G.K.-S."/>
            <person name="Wu Z."/>
            <person name="Paulsen I.T."/>
            <person name="Reizer J."/>
            <person name="Saier M.H. Jr."/>
            <person name="Hancock R.E.W."/>
            <person name="Lory S."/>
            <person name="Olson M.V."/>
        </authorList>
    </citation>
    <scope>NUCLEOTIDE SEQUENCE [LARGE SCALE GENOMIC DNA]</scope>
    <source>
        <strain>ATCC 15692 / DSM 22644 / CIP 104116 / JCM 14847 / LMG 12228 / 1C / PRS 101 / PAO1</strain>
    </source>
</reference>
<reference key="2">
    <citation type="journal article" date="2001" name="Proc. Natl. Acad. Sci. U.S.A.">
        <title>A quorum sensing-associated virulence gene of Pseudomonas aeruginosa encodes a LysR-like transcription regulator with a unique self-regulatory mechanism.</title>
        <authorList>
            <person name="Cao H."/>
            <person name="Krishnan G."/>
            <person name="Goumnerov B."/>
            <person name="Tsongalis J."/>
            <person name="Tompkins R."/>
            <person name="Rahme L.G."/>
        </authorList>
    </citation>
    <scope>FUNCTION</scope>
    <scope>SUBCELLULAR LOCATION</scope>
</reference>
<reference key="3">
    <citation type="journal article" date="2006" name="Mol. Microbiol.">
        <title>MvfR, a key Pseudomonas aeruginosa pathogenicity LTTR-class regulatory protein, has dual ligands.</title>
        <authorList>
            <person name="Xiao G."/>
            <person name="Deziel E."/>
            <person name="He J."/>
            <person name="Lepine F."/>
            <person name="Lesic B."/>
            <person name="Castonguay M.H."/>
            <person name="Milot S."/>
            <person name="Tampakaki A.P."/>
            <person name="Stachel S.E."/>
            <person name="Rahme L.G."/>
        </authorList>
    </citation>
    <scope>FUNCTION</scope>
    <scope>ACTIVITY REGULATION</scope>
</reference>
<reference key="4">
    <citation type="journal article" date="2016" name="Sci. Rep.">
        <title>Evidence for direct control of virulence and defense gene circuits by the Pseudomonas aeruginosa quorum sensing regulator, MvfR.</title>
        <authorList>
            <person name="Maura D."/>
            <person name="Hazan R."/>
            <person name="Kitao T."/>
            <person name="Ballok A.E."/>
            <person name="Rahme L.G."/>
        </authorList>
    </citation>
    <scope>FUNCTION</scope>
</reference>
<reference evidence="8" key="5">
    <citation type="journal article" date="2018" name="MBio">
        <title>Molecular Insights into Function and Competitive Inhibition of Pseudomonas aeruginosa Multiple Virulence Factor Regulator.</title>
        <authorList>
            <person name="Kitao T."/>
            <person name="Lepine F."/>
            <person name="Babloudi S."/>
            <person name="Walte F."/>
            <person name="Steinbacher S."/>
            <person name="Maskos K."/>
            <person name="Blaesse M."/>
            <person name="Negri M."/>
            <person name="Pucci M."/>
            <person name="Zahler B."/>
            <person name="Felici A."/>
            <person name="Rahme L.G."/>
        </authorList>
    </citation>
    <scope>X-RAY CRYSTALLOGRAPHY (2.65 ANGSTROMS) OF 94-295</scope>
    <scope>SUBUNIT</scope>
</reference>
<gene>
    <name evidence="6" type="primary">mvfR</name>
    <name type="ordered locus">PA1003</name>
</gene>
<dbReference type="EMBL" id="AE004091">
    <property type="protein sequence ID" value="AAG04392.1"/>
    <property type="molecule type" value="Genomic_DNA"/>
</dbReference>
<dbReference type="PIR" id="D83519">
    <property type="entry name" value="D83519"/>
</dbReference>
<dbReference type="RefSeq" id="NP_249694.1">
    <property type="nucleotide sequence ID" value="NC_002516.2"/>
</dbReference>
<dbReference type="RefSeq" id="WP_003108614.1">
    <property type="nucleotide sequence ID" value="NZ_QZGE01000006.1"/>
</dbReference>
<dbReference type="PDB" id="6B8A">
    <property type="method" value="X-ray"/>
    <property type="resolution" value="2.65 A"/>
    <property type="chains" value="A/B=94-295"/>
</dbReference>
<dbReference type="PDB" id="6Q7U">
    <property type="method" value="X-ray"/>
    <property type="resolution" value="3.14 A"/>
    <property type="chains" value="A=91-319"/>
</dbReference>
<dbReference type="PDB" id="6Q7V">
    <property type="method" value="X-ray"/>
    <property type="resolution" value="2.56 A"/>
    <property type="chains" value="A/B=91-319"/>
</dbReference>
<dbReference type="PDB" id="6Q7W">
    <property type="method" value="X-ray"/>
    <property type="resolution" value="2.82 A"/>
    <property type="chains" value="A=91-319"/>
</dbReference>
<dbReference type="PDB" id="6YIZ">
    <property type="method" value="X-ray"/>
    <property type="resolution" value="2.16 A"/>
    <property type="chains" value="A/B=91-319"/>
</dbReference>
<dbReference type="PDB" id="7NBW">
    <property type="method" value="X-ray"/>
    <property type="resolution" value="2.28 A"/>
    <property type="chains" value="A=91-319"/>
</dbReference>
<dbReference type="PDB" id="7P4U">
    <property type="method" value="X-ray"/>
    <property type="resolution" value="2.74 A"/>
    <property type="chains" value="A=91-319"/>
</dbReference>
<dbReference type="PDB" id="7QA0">
    <property type="method" value="X-ray"/>
    <property type="resolution" value="2.67 A"/>
    <property type="chains" value="A/B=1-332"/>
</dbReference>
<dbReference type="PDB" id="7QA3">
    <property type="method" value="X-ray"/>
    <property type="resolution" value="2.67 A"/>
    <property type="chains" value="A/B=1-332"/>
</dbReference>
<dbReference type="PDB" id="7QAV">
    <property type="method" value="X-ray"/>
    <property type="resolution" value="2.65 A"/>
    <property type="chains" value="A/B=1-332"/>
</dbReference>
<dbReference type="PDB" id="8Q5K">
    <property type="method" value="X-ray"/>
    <property type="resolution" value="2.80 A"/>
    <property type="chains" value="A=94-309"/>
</dbReference>
<dbReference type="PDB" id="8Q5L">
    <property type="method" value="X-ray"/>
    <property type="resolution" value="2.90 A"/>
    <property type="chains" value="A=94-309"/>
</dbReference>
<dbReference type="PDBsum" id="6B8A"/>
<dbReference type="PDBsum" id="6Q7U"/>
<dbReference type="PDBsum" id="6Q7V"/>
<dbReference type="PDBsum" id="6Q7W"/>
<dbReference type="PDBsum" id="6YIZ"/>
<dbReference type="PDBsum" id="7NBW"/>
<dbReference type="PDBsum" id="7P4U"/>
<dbReference type="PDBsum" id="7QA0"/>
<dbReference type="PDBsum" id="7QA3"/>
<dbReference type="PDBsum" id="7QAV"/>
<dbReference type="PDBsum" id="8Q5K"/>
<dbReference type="PDBsum" id="8Q5L"/>
<dbReference type="SMR" id="Q9I4X0"/>
<dbReference type="STRING" id="208964.PA1003"/>
<dbReference type="PaxDb" id="208964-PA1003"/>
<dbReference type="DNASU" id="879994"/>
<dbReference type="GeneID" id="879994"/>
<dbReference type="KEGG" id="pae:PA1003"/>
<dbReference type="PATRIC" id="fig|208964.12.peg.1035"/>
<dbReference type="PseudoCAP" id="PA1003"/>
<dbReference type="HOGENOM" id="CLU_060101_0_0_6"/>
<dbReference type="InParanoid" id="Q9I4X0"/>
<dbReference type="OrthoDB" id="464481at2"/>
<dbReference type="PhylomeDB" id="Q9I4X0"/>
<dbReference type="BioCyc" id="PAER208964:G1FZ6-1022-MONOMER"/>
<dbReference type="Proteomes" id="UP000002438">
    <property type="component" value="Chromosome"/>
</dbReference>
<dbReference type="GO" id="GO:0005576">
    <property type="term" value="C:extracellular region"/>
    <property type="evidence" value="ECO:0007669"/>
    <property type="project" value="UniProtKB-SubCell"/>
</dbReference>
<dbReference type="GO" id="GO:0005886">
    <property type="term" value="C:plasma membrane"/>
    <property type="evidence" value="ECO:0007669"/>
    <property type="project" value="UniProtKB-SubCell"/>
</dbReference>
<dbReference type="GO" id="GO:0003677">
    <property type="term" value="F:DNA binding"/>
    <property type="evidence" value="ECO:0007669"/>
    <property type="project" value="UniProtKB-KW"/>
</dbReference>
<dbReference type="GO" id="GO:0003700">
    <property type="term" value="F:DNA-binding transcription factor activity"/>
    <property type="evidence" value="ECO:0000318"/>
    <property type="project" value="GO_Central"/>
</dbReference>
<dbReference type="GO" id="GO:0006355">
    <property type="term" value="P:regulation of DNA-templated transcription"/>
    <property type="evidence" value="ECO:0000318"/>
    <property type="project" value="GO_Central"/>
</dbReference>
<dbReference type="GO" id="GO:0034762">
    <property type="term" value="P:regulation of transmembrane transport"/>
    <property type="evidence" value="ECO:0000315"/>
    <property type="project" value="PseudoCAP"/>
</dbReference>
<dbReference type="CDD" id="cd05466">
    <property type="entry name" value="PBP2_LTTR_substrate"/>
    <property type="match status" value="1"/>
</dbReference>
<dbReference type="FunFam" id="3.40.190.290:FF:000026">
    <property type="entry name" value="Transcriptional regulator MvfR"/>
    <property type="match status" value="1"/>
</dbReference>
<dbReference type="Gene3D" id="3.40.190.290">
    <property type="match status" value="1"/>
</dbReference>
<dbReference type="Gene3D" id="1.10.10.10">
    <property type="entry name" value="Winged helix-like DNA-binding domain superfamily/Winged helix DNA-binding domain"/>
    <property type="match status" value="1"/>
</dbReference>
<dbReference type="InterPro" id="IPR050176">
    <property type="entry name" value="LTTR"/>
</dbReference>
<dbReference type="InterPro" id="IPR005119">
    <property type="entry name" value="LysR_subst-bd"/>
</dbReference>
<dbReference type="InterPro" id="IPR000847">
    <property type="entry name" value="Tscrpt_reg_HTH_LysR"/>
</dbReference>
<dbReference type="InterPro" id="IPR036388">
    <property type="entry name" value="WH-like_DNA-bd_sf"/>
</dbReference>
<dbReference type="InterPro" id="IPR036390">
    <property type="entry name" value="WH_DNA-bd_sf"/>
</dbReference>
<dbReference type="PANTHER" id="PTHR30579:SF7">
    <property type="entry name" value="HTH-TYPE TRANSCRIPTIONAL REGULATOR LRHA-RELATED"/>
    <property type="match status" value="1"/>
</dbReference>
<dbReference type="PANTHER" id="PTHR30579">
    <property type="entry name" value="TRANSCRIPTIONAL REGULATOR"/>
    <property type="match status" value="1"/>
</dbReference>
<dbReference type="Pfam" id="PF00126">
    <property type="entry name" value="HTH_1"/>
    <property type="match status" value="1"/>
</dbReference>
<dbReference type="Pfam" id="PF03466">
    <property type="entry name" value="LysR_substrate"/>
    <property type="match status" value="1"/>
</dbReference>
<dbReference type="SUPFAM" id="SSF53850">
    <property type="entry name" value="Periplasmic binding protein-like II"/>
    <property type="match status" value="1"/>
</dbReference>
<dbReference type="SUPFAM" id="SSF46785">
    <property type="entry name" value="Winged helix' DNA-binding domain"/>
    <property type="match status" value="1"/>
</dbReference>
<dbReference type="PROSITE" id="PS50931">
    <property type="entry name" value="HTH_LYSR"/>
    <property type="match status" value="1"/>
</dbReference>
<keyword id="KW-0002">3D-structure</keyword>
<keyword id="KW-0997">Cell inner membrane</keyword>
<keyword id="KW-1003">Cell membrane</keyword>
<keyword id="KW-0238">DNA-binding</keyword>
<keyword id="KW-0472">Membrane</keyword>
<keyword id="KW-1185">Reference proteome</keyword>
<keyword id="KW-0964">Secreted</keyword>
<keyword id="KW-0804">Transcription</keyword>
<keyword id="KW-0805">Transcription regulation</keyword>
<keyword id="KW-0843">Virulence</keyword>
<accession>Q9I4X0</accession>
<comment type="function">
    <text evidence="2 3 4">Transcription regulator that plays a critical role in virulence by positively regulating the expression of multiple quorum sensing (QS)-regulated virulence factors, genes involved in protein secretion, translation, response to oxidative stress and the phnAB operon (PubMed:11724939, PubMed:17083468, PubMed:27678057). At the stationary phase, negatively autoregulates its function through cleavage and translocation to the extracellular space (PubMed:11724939).</text>
</comment>
<comment type="activity regulation">
    <text evidence="3">Both 3,4-dihydroxy-2-heptylquinoline (PQS) and its precursor 4-hydroxy-2-heptylquinoline (HHQ) function as ligands and promote MvfR DNA-binding activity leading to transcriptional activation.</text>
</comment>
<comment type="subunit">
    <text evidence="5">Forms homooligomers.</text>
</comment>
<comment type="subcellular location">
    <subcellularLocation>
        <location evidence="2">Cell inner membrane</location>
    </subcellularLocation>
    <subcellularLocation>
        <location evidence="2">Secreted</location>
    </subcellularLocation>
    <text evidence="2">At stationary phase, gets cleaved and subsequently released in the extracellular space where its transcriptional activity is inhibited.</text>
</comment>
<comment type="similarity">
    <text evidence="7">Belongs to the LysR transcriptional regulatory family.</text>
</comment>
<sequence>MPIHNLNHVNMFLQVIASGSISSAARILRKSHTAVSSAVSNLEIDLCVELVRRDGYKVEPTEQALRLIPYMRSLLNYQQLIGDIAFNLNKGPRNLRVLLDTAIPPSFCDTVSSVLLDDFNMVSLIRTSPADSLATIKQDNAEIDIAITIDEELKISRFNQCVLGYTKAFVVAHPQHPLCNASLHSIASLANYRQISLGSRSGQHSNLLRPVSDKVLFVENFDDMLRLVEAGVGWGIAPHYFVEERLRNGTLAVLSELYEPGGIDTKVYCYYNTALESERSFLRFLESARQRLRELGRQRFDDAPAWQPSIVETAQRRSGPKALAYRQRAAPE</sequence>
<proteinExistence type="evidence at protein level"/>
<name>MVFR_PSEAE</name>
<organism>
    <name type="scientific">Pseudomonas aeruginosa (strain ATCC 15692 / DSM 22644 / CIP 104116 / JCM 14847 / LMG 12228 / 1C / PRS 101 / PAO1)</name>
    <dbReference type="NCBI Taxonomy" id="208964"/>
    <lineage>
        <taxon>Bacteria</taxon>
        <taxon>Pseudomonadati</taxon>
        <taxon>Pseudomonadota</taxon>
        <taxon>Gammaproteobacteria</taxon>
        <taxon>Pseudomonadales</taxon>
        <taxon>Pseudomonadaceae</taxon>
        <taxon>Pseudomonas</taxon>
    </lineage>
</organism>
<evidence type="ECO:0000255" key="1">
    <source>
        <dbReference type="PROSITE-ProRule" id="PRU00253"/>
    </source>
</evidence>
<evidence type="ECO:0000269" key="2">
    <source>
    </source>
</evidence>
<evidence type="ECO:0000269" key="3">
    <source>
    </source>
</evidence>
<evidence type="ECO:0000269" key="4">
    <source>
    </source>
</evidence>
<evidence type="ECO:0000269" key="5">
    <source>
    </source>
</evidence>
<evidence type="ECO:0000303" key="6">
    <source>
    </source>
</evidence>
<evidence type="ECO:0000305" key="7"/>
<evidence type="ECO:0007744" key="8">
    <source>
        <dbReference type="PDB" id="6B8A"/>
    </source>
</evidence>
<evidence type="ECO:0007829" key="9">
    <source>
        <dbReference type="PDB" id="6B8A"/>
    </source>
</evidence>
<evidence type="ECO:0007829" key="10">
    <source>
        <dbReference type="PDB" id="6Q7V"/>
    </source>
</evidence>
<evidence type="ECO:0007829" key="11">
    <source>
        <dbReference type="PDB" id="6YIZ"/>
    </source>
</evidence>
<evidence type="ECO:0007829" key="12">
    <source>
        <dbReference type="PDB" id="7NBW"/>
    </source>
</evidence>
<evidence type="ECO:0007829" key="13">
    <source>
        <dbReference type="PDB" id="7QA3"/>
    </source>
</evidence>
<feature type="chain" id="PRO_0000448531" description="Multiple virulence factor regulator MvfR">
    <location>
        <begin position="1"/>
        <end position="332"/>
    </location>
</feature>
<feature type="domain" description="HTH lysR-type" evidence="1">
    <location>
        <begin position="4"/>
        <end position="61"/>
    </location>
</feature>
<feature type="DNA-binding region" description="H-T-H motif" evidence="1">
    <location>
        <begin position="21"/>
        <end position="40"/>
    </location>
</feature>
<feature type="helix" evidence="11">
    <location>
        <begin position="92"/>
        <end position="94"/>
    </location>
</feature>
<feature type="strand" evidence="11">
    <location>
        <begin position="95"/>
        <end position="100"/>
    </location>
</feature>
<feature type="helix" evidence="11">
    <location>
        <begin position="105"/>
        <end position="118"/>
    </location>
</feature>
<feature type="strand" evidence="11">
    <location>
        <begin position="122"/>
        <end position="127"/>
    </location>
</feature>
<feature type="helix" evidence="11">
    <location>
        <begin position="129"/>
        <end position="131"/>
    </location>
</feature>
<feature type="helix" evidence="11">
    <location>
        <begin position="132"/>
        <end position="137"/>
    </location>
</feature>
<feature type="helix" evidence="11">
    <location>
        <begin position="139"/>
        <end position="141"/>
    </location>
</feature>
<feature type="strand" evidence="11">
    <location>
        <begin position="145"/>
        <end position="149"/>
    </location>
</feature>
<feature type="strand" evidence="13">
    <location>
        <begin position="153"/>
        <end position="155"/>
    </location>
</feature>
<feature type="strand" evidence="11">
    <location>
        <begin position="156"/>
        <end position="172"/>
    </location>
</feature>
<feature type="strand" evidence="9">
    <location>
        <begin position="174"/>
        <end position="176"/>
    </location>
</feature>
<feature type="helix" evidence="11">
    <location>
        <begin position="177"/>
        <end position="180"/>
    </location>
</feature>
<feature type="strand" evidence="10">
    <location>
        <begin position="181"/>
        <end position="183"/>
    </location>
</feature>
<feature type="helix" evidence="11">
    <location>
        <begin position="186"/>
        <end position="190"/>
    </location>
</feature>
<feature type="strand" evidence="11">
    <location>
        <begin position="194"/>
        <end position="197"/>
    </location>
</feature>
<feature type="strand" evidence="10">
    <location>
        <begin position="200"/>
        <end position="202"/>
    </location>
</feature>
<feature type="turn" evidence="12">
    <location>
        <begin position="206"/>
        <end position="208"/>
    </location>
</feature>
<feature type="strand" evidence="11">
    <location>
        <begin position="213"/>
        <end position="220"/>
    </location>
</feature>
<feature type="helix" evidence="11">
    <location>
        <begin position="221"/>
        <end position="230"/>
    </location>
</feature>
<feature type="strand" evidence="11">
    <location>
        <begin position="234"/>
        <end position="238"/>
    </location>
</feature>
<feature type="helix" evidence="11">
    <location>
        <begin position="239"/>
        <end position="247"/>
    </location>
</feature>
<feature type="strand" evidence="11">
    <location>
        <begin position="249"/>
        <end position="254"/>
    </location>
</feature>
<feature type="turn" evidence="11">
    <location>
        <begin position="256"/>
        <end position="258"/>
    </location>
</feature>
<feature type="strand" evidence="11">
    <location>
        <begin position="263"/>
        <end position="272"/>
    </location>
</feature>
<feature type="helix" evidence="11">
    <location>
        <begin position="273"/>
        <end position="277"/>
    </location>
</feature>
<feature type="helix" evidence="11">
    <location>
        <begin position="279"/>
        <end position="297"/>
    </location>
</feature>
<feature type="helix" evidence="11">
    <location>
        <begin position="298"/>
        <end position="300"/>
    </location>
</feature>
<protein>
    <recommendedName>
        <fullName evidence="6">Multiple virulence factor regulator MvfR</fullName>
    </recommendedName>
    <alternativeName>
        <fullName>Transcriptional regulator MvfR</fullName>
    </alternativeName>
</protein>